<comment type="function">
    <text evidence="1">F(1)F(0) ATP synthase produces ATP from ADP in the presence of a proton or sodium gradient. F-type ATPases consist of two structural domains, F(1) containing the extramembraneous catalytic core and F(0) containing the membrane proton channel, linked together by a central stalk and a peripheral stalk. During catalysis, ATP synthesis in the catalytic domain of F(1) is coupled via a rotary mechanism of the central stalk subunits to proton translocation.</text>
</comment>
<comment type="function">
    <text evidence="1">Key component of the F(0) channel; it plays a direct role in translocation across the membrane. A homomeric c-ring of between 10-14 subunits forms the central stalk rotor element with the F(1) delta and epsilon subunits.</text>
</comment>
<comment type="subunit">
    <text evidence="1">F-type ATPases have 2 components, F(1) - the catalytic core - and F(0) - the membrane proton channel. F(1) has five subunits: alpha(3), beta(3), gamma(1), delta(1), epsilon(1). F(0) has four main subunits: a(1), b(1), b'(1) and c(10-14). The alpha and beta chains form an alternating ring which encloses part of the gamma chain. F(1) is attached to F(0) by a central stalk formed by the gamma and epsilon chains, while a peripheral stalk is formed by the delta, b and b' chains.</text>
</comment>
<comment type="subcellular location">
    <subcellularLocation>
        <location evidence="1">Cellular thylakoid membrane</location>
        <topology evidence="1">Multi-pass membrane protein</topology>
    </subcellularLocation>
</comment>
<comment type="similarity">
    <text evidence="1">Belongs to the ATPase C chain family.</text>
</comment>
<dbReference type="EMBL" id="CT971583">
    <property type="protein sequence ID" value="CAK24447.1"/>
    <property type="molecule type" value="Genomic_DNA"/>
</dbReference>
<dbReference type="SMR" id="A5GND2"/>
<dbReference type="STRING" id="32051.SynWH7803_2021"/>
<dbReference type="KEGG" id="syx:SynWH7803_2021"/>
<dbReference type="eggNOG" id="COG0636">
    <property type="taxonomic scope" value="Bacteria"/>
</dbReference>
<dbReference type="HOGENOM" id="CLU_148047_2_0_3"/>
<dbReference type="OrthoDB" id="9810379at2"/>
<dbReference type="Proteomes" id="UP000001566">
    <property type="component" value="Chromosome"/>
</dbReference>
<dbReference type="GO" id="GO:0031676">
    <property type="term" value="C:plasma membrane-derived thylakoid membrane"/>
    <property type="evidence" value="ECO:0007669"/>
    <property type="project" value="UniProtKB-SubCell"/>
</dbReference>
<dbReference type="GO" id="GO:0045259">
    <property type="term" value="C:proton-transporting ATP synthase complex"/>
    <property type="evidence" value="ECO:0007669"/>
    <property type="project" value="UniProtKB-KW"/>
</dbReference>
<dbReference type="GO" id="GO:0033177">
    <property type="term" value="C:proton-transporting two-sector ATPase complex, proton-transporting domain"/>
    <property type="evidence" value="ECO:0007669"/>
    <property type="project" value="InterPro"/>
</dbReference>
<dbReference type="GO" id="GO:0008289">
    <property type="term" value="F:lipid binding"/>
    <property type="evidence" value="ECO:0007669"/>
    <property type="project" value="UniProtKB-KW"/>
</dbReference>
<dbReference type="GO" id="GO:0046933">
    <property type="term" value="F:proton-transporting ATP synthase activity, rotational mechanism"/>
    <property type="evidence" value="ECO:0007669"/>
    <property type="project" value="UniProtKB-UniRule"/>
</dbReference>
<dbReference type="CDD" id="cd18183">
    <property type="entry name" value="ATP-synt_Fo_c_ATPH"/>
    <property type="match status" value="1"/>
</dbReference>
<dbReference type="FunFam" id="1.20.20.10:FF:000001">
    <property type="entry name" value="ATP synthase subunit c, chloroplastic"/>
    <property type="match status" value="1"/>
</dbReference>
<dbReference type="Gene3D" id="1.20.20.10">
    <property type="entry name" value="F1F0 ATP synthase subunit C"/>
    <property type="match status" value="1"/>
</dbReference>
<dbReference type="HAMAP" id="MF_01396">
    <property type="entry name" value="ATP_synth_c_bact"/>
    <property type="match status" value="1"/>
</dbReference>
<dbReference type="InterPro" id="IPR005953">
    <property type="entry name" value="ATP_synth_csu_bac/chlpt"/>
</dbReference>
<dbReference type="InterPro" id="IPR000454">
    <property type="entry name" value="ATP_synth_F0_csu"/>
</dbReference>
<dbReference type="InterPro" id="IPR020537">
    <property type="entry name" value="ATP_synth_F0_csu_DDCD_BS"/>
</dbReference>
<dbReference type="InterPro" id="IPR038662">
    <property type="entry name" value="ATP_synth_F0_csu_sf"/>
</dbReference>
<dbReference type="InterPro" id="IPR002379">
    <property type="entry name" value="ATPase_proteolipid_c-like_dom"/>
</dbReference>
<dbReference type="InterPro" id="IPR035921">
    <property type="entry name" value="F/V-ATP_Csub_sf"/>
</dbReference>
<dbReference type="NCBIfam" id="TIGR01260">
    <property type="entry name" value="ATP_synt_c"/>
    <property type="match status" value="1"/>
</dbReference>
<dbReference type="NCBIfam" id="NF005608">
    <property type="entry name" value="PRK07354.1"/>
    <property type="match status" value="1"/>
</dbReference>
<dbReference type="PANTHER" id="PTHR10031">
    <property type="entry name" value="ATP SYNTHASE LIPID-BINDING PROTEIN, MITOCHONDRIAL"/>
    <property type="match status" value="1"/>
</dbReference>
<dbReference type="PANTHER" id="PTHR10031:SF0">
    <property type="entry name" value="ATPASE PROTEIN 9"/>
    <property type="match status" value="1"/>
</dbReference>
<dbReference type="Pfam" id="PF00137">
    <property type="entry name" value="ATP-synt_C"/>
    <property type="match status" value="1"/>
</dbReference>
<dbReference type="PRINTS" id="PR00124">
    <property type="entry name" value="ATPASEC"/>
</dbReference>
<dbReference type="SUPFAM" id="SSF81333">
    <property type="entry name" value="F1F0 ATP synthase subunit C"/>
    <property type="match status" value="1"/>
</dbReference>
<dbReference type="PROSITE" id="PS00605">
    <property type="entry name" value="ATPASE_C"/>
    <property type="match status" value="1"/>
</dbReference>
<protein>
    <recommendedName>
        <fullName evidence="1">ATP synthase subunit c</fullName>
    </recommendedName>
    <alternativeName>
        <fullName evidence="1">ATP synthase F(0) sector subunit c</fullName>
    </alternativeName>
    <alternativeName>
        <fullName evidence="1">F-type ATPase subunit c</fullName>
        <shortName evidence="1">F-ATPase subunit c</shortName>
    </alternativeName>
    <alternativeName>
        <fullName evidence="1">Lipid-binding protein</fullName>
    </alternativeName>
</protein>
<gene>
    <name evidence="1" type="primary">atpE</name>
    <name evidence="1" type="synonym">atpH</name>
    <name type="ordered locus">SynWH7803_2021</name>
</gene>
<proteinExistence type="inferred from homology"/>
<accession>A5GND2</accession>
<feature type="chain" id="PRO_1000184520" description="ATP synthase subunit c">
    <location>
        <begin position="1"/>
        <end position="82"/>
    </location>
</feature>
<feature type="transmembrane region" description="Helical" evidence="1">
    <location>
        <begin position="7"/>
        <end position="27"/>
    </location>
</feature>
<feature type="transmembrane region" description="Helical" evidence="1">
    <location>
        <begin position="57"/>
        <end position="77"/>
    </location>
</feature>
<feature type="site" description="Reversibly protonated during proton transport" evidence="1">
    <location>
        <position position="61"/>
    </location>
</feature>
<reference key="1">
    <citation type="submission" date="2006-05" db="EMBL/GenBank/DDBJ databases">
        <authorList>
            <consortium name="Genoscope"/>
        </authorList>
    </citation>
    <scope>NUCLEOTIDE SEQUENCE [LARGE SCALE GENOMIC DNA]</scope>
    <source>
        <strain>WH7803</strain>
    </source>
</reference>
<keyword id="KW-0066">ATP synthesis</keyword>
<keyword id="KW-0138">CF(0)</keyword>
<keyword id="KW-0375">Hydrogen ion transport</keyword>
<keyword id="KW-0406">Ion transport</keyword>
<keyword id="KW-0446">Lipid-binding</keyword>
<keyword id="KW-0472">Membrane</keyword>
<keyword id="KW-1185">Reference proteome</keyword>
<keyword id="KW-0793">Thylakoid</keyword>
<keyword id="KW-0812">Transmembrane</keyword>
<keyword id="KW-1133">Transmembrane helix</keyword>
<keyword id="KW-0813">Transport</keyword>
<name>ATPL_SYNPW</name>
<evidence type="ECO:0000255" key="1">
    <source>
        <dbReference type="HAMAP-Rule" id="MF_01396"/>
    </source>
</evidence>
<sequence>MSDLTSAASVLAAALAVGLAAIGPGIGQGTAAGQAVEGIARQPEAEGKIRGTLLLSLAFMEALTIYGLVVALVLLFANPFAG</sequence>
<organism>
    <name type="scientific">Synechococcus sp. (strain WH7803)</name>
    <dbReference type="NCBI Taxonomy" id="32051"/>
    <lineage>
        <taxon>Bacteria</taxon>
        <taxon>Bacillati</taxon>
        <taxon>Cyanobacteriota</taxon>
        <taxon>Cyanophyceae</taxon>
        <taxon>Synechococcales</taxon>
        <taxon>Synechococcaceae</taxon>
        <taxon>Synechococcus</taxon>
    </lineage>
</organism>